<accession>Q1L0X2</accession>
<keyword id="KW-0007">Acetylation</keyword>
<keyword id="KW-0963">Cytoplasm</keyword>
<keyword id="KW-0217">Developmental protein</keyword>
<keyword id="KW-0472">Membrane</keyword>
<comment type="function">
    <text evidence="3">Inhibits fibroblast growth factor (FGF)-induced retinal lens fiber differentiation, probably by inhibiting FGF-mediated phosphorylation of ERK1/2 (By similarity). Inhibits TGFB-induced epithelial-to-mesenchymal transition in lens epithelial cells (By similarity).</text>
</comment>
<comment type="subunit">
    <text evidence="3">Forms heterodimers with SPRY2 (By similarity). Interacts with TESK1 (By similarity). Interacts with CAV1 (via C-terminus) (By similarity).</text>
</comment>
<comment type="subcellular location">
    <subcellularLocation>
        <location evidence="1">Cytoplasm</location>
    </subcellularLocation>
    <subcellularLocation>
        <location evidence="1">Membrane</location>
        <topology evidence="1">Peripheral membrane protein</topology>
    </subcellularLocation>
    <text evidence="1">Found in the cytoplasm in unstimulated cells but is translocated to the membrane ruffles in cells stimulated with EGF (epidermal growth factor).</text>
</comment>
<comment type="domain">
    <text evidence="1">The Cys-rich domain is responsible for the localization of the protein to the membrane ruffles.</text>
</comment>
<comment type="similarity">
    <text evidence="6">Belongs to the sprouty family.</text>
</comment>
<organism>
    <name type="scientific">Cervus elaphus</name>
    <name type="common">Red deer</name>
    <dbReference type="NCBI Taxonomy" id="9860"/>
    <lineage>
        <taxon>Eukaryota</taxon>
        <taxon>Metazoa</taxon>
        <taxon>Chordata</taxon>
        <taxon>Craniata</taxon>
        <taxon>Vertebrata</taxon>
        <taxon>Euteleostomi</taxon>
        <taxon>Mammalia</taxon>
        <taxon>Eutheria</taxon>
        <taxon>Laurasiatheria</taxon>
        <taxon>Artiodactyla</taxon>
        <taxon>Ruminantia</taxon>
        <taxon>Pecora</taxon>
        <taxon>Cervidae</taxon>
        <taxon>Cervinae</taxon>
        <taxon>Cervus</taxon>
    </lineage>
</organism>
<evidence type="ECO:0000250" key="1"/>
<evidence type="ECO:0000250" key="2">
    <source>
        <dbReference type="UniProtKB" id="O43609"/>
    </source>
</evidence>
<evidence type="ECO:0000250" key="3">
    <source>
        <dbReference type="UniProtKB" id="Q9QXV9"/>
    </source>
</evidence>
<evidence type="ECO:0000255" key="4">
    <source>
        <dbReference type="PROSITE-ProRule" id="PRU00572"/>
    </source>
</evidence>
<evidence type="ECO:0000256" key="5">
    <source>
        <dbReference type="SAM" id="MobiDB-lite"/>
    </source>
</evidence>
<evidence type="ECO:0000305" key="6"/>
<dbReference type="EMBL" id="DQ239787">
    <property type="protein sequence ID" value="ABF29589.1"/>
    <property type="molecule type" value="mRNA"/>
</dbReference>
<dbReference type="SMR" id="Q1L0X2"/>
<dbReference type="GO" id="GO:0005829">
    <property type="term" value="C:cytosol"/>
    <property type="evidence" value="ECO:0007669"/>
    <property type="project" value="TreeGrafter"/>
</dbReference>
<dbReference type="GO" id="GO:0016020">
    <property type="term" value="C:membrane"/>
    <property type="evidence" value="ECO:0007669"/>
    <property type="project" value="UniProtKB-SubCell"/>
</dbReference>
<dbReference type="GO" id="GO:0048513">
    <property type="term" value="P:animal organ development"/>
    <property type="evidence" value="ECO:0007669"/>
    <property type="project" value="TreeGrafter"/>
</dbReference>
<dbReference type="GO" id="GO:0010719">
    <property type="term" value="P:negative regulation of epithelial to mesenchymal transition"/>
    <property type="evidence" value="ECO:0000250"/>
    <property type="project" value="UniProtKB"/>
</dbReference>
<dbReference type="GO" id="GO:0070373">
    <property type="term" value="P:negative regulation of ERK1 and ERK2 cascade"/>
    <property type="evidence" value="ECO:0000250"/>
    <property type="project" value="UniProtKB"/>
</dbReference>
<dbReference type="GO" id="GO:0040037">
    <property type="term" value="P:negative regulation of fibroblast growth factor receptor signaling pathway"/>
    <property type="evidence" value="ECO:0007669"/>
    <property type="project" value="TreeGrafter"/>
</dbReference>
<dbReference type="GO" id="GO:1902747">
    <property type="term" value="P:negative regulation of lens fiber cell differentiation"/>
    <property type="evidence" value="ECO:0000250"/>
    <property type="project" value="UniProtKB"/>
</dbReference>
<dbReference type="GO" id="GO:0046580">
    <property type="term" value="P:negative regulation of Ras protein signal transduction"/>
    <property type="evidence" value="ECO:0007669"/>
    <property type="project" value="TreeGrafter"/>
</dbReference>
<dbReference type="GO" id="GO:0030512">
    <property type="term" value="P:negative regulation of transforming growth factor beta receptor signaling pathway"/>
    <property type="evidence" value="ECO:0000250"/>
    <property type="project" value="UniProtKB"/>
</dbReference>
<dbReference type="InterPro" id="IPR007875">
    <property type="entry name" value="Sprouty"/>
</dbReference>
<dbReference type="InterPro" id="IPR051192">
    <property type="entry name" value="Sprouty_domain"/>
</dbReference>
<dbReference type="PANTHER" id="PTHR12365:SF10">
    <property type="entry name" value="PROTEIN SPROUTY HOMOLOG 1"/>
    <property type="match status" value="1"/>
</dbReference>
<dbReference type="PANTHER" id="PTHR12365">
    <property type="entry name" value="SPROUTY"/>
    <property type="match status" value="1"/>
</dbReference>
<dbReference type="Pfam" id="PF05210">
    <property type="entry name" value="Sprouty"/>
    <property type="match status" value="1"/>
</dbReference>
<dbReference type="PROSITE" id="PS51227">
    <property type="entry name" value="SPR"/>
    <property type="match status" value="1"/>
</dbReference>
<name>SPY1_CEREL</name>
<reference key="1">
    <citation type="journal article" date="2007" name="Mol. Genet. Genomics">
        <title>Gene expression dynamics in deer antler: mesenchymal differentiation toward chondrogenesis.</title>
        <authorList>
            <person name="Gyurjan I. Jr."/>
            <person name="Molnar A."/>
            <person name="Borsy A."/>
            <person name="Steger V."/>
            <person name="Hackler L. Jr."/>
            <person name="Zomborszky Z."/>
            <person name="Papp P."/>
            <person name="Duda E."/>
            <person name="Deak F."/>
            <person name="Lakatos P."/>
            <person name="Puskas L.G."/>
            <person name="Orosz L."/>
        </authorList>
    </citation>
    <scope>NUCLEOTIDE SEQUENCE [MRNA]</scope>
</reference>
<gene>
    <name type="primary">SPRY1</name>
</gene>
<feature type="chain" id="PRO_0000295298" description="Protein sprouty homolog 1">
    <location>
        <begin position="1"/>
        <end position="319"/>
    </location>
</feature>
<feature type="domain" description="SPR" evidence="4">
    <location>
        <begin position="183"/>
        <end position="295"/>
    </location>
</feature>
<feature type="region of interest" description="Disordered" evidence="5">
    <location>
        <begin position="54"/>
        <end position="160"/>
    </location>
</feature>
<feature type="compositionally biased region" description="Basic and acidic residues" evidence="5">
    <location>
        <begin position="69"/>
        <end position="79"/>
    </location>
</feature>
<feature type="compositionally biased region" description="Low complexity" evidence="5">
    <location>
        <begin position="112"/>
        <end position="131"/>
    </location>
</feature>
<feature type="modified residue" description="N-acetylmethionine" evidence="2">
    <location>
        <position position="1"/>
    </location>
</feature>
<sequence length="319" mass="34952">MDPQNQHGSGSSLVVIQQPALDNRQRLDYEREIQPAAILSLDQIKAIRGSNEYTEGPSVVKRPAPRTAPRQEKHERTHEIIPINVNNNYEHRPTSHLGHTGLSNNTRGPILSRSTSTGSAASSGSNSSASSEQGLLGRSPPTRPIPGHRSERAIRTQPKQLIVDDLKGSLKEDLTQHKFICEQCGKCKCGECTAPRTLPSCLACNRQCLCSAESMVEYGTCMCLVKGIFYHCSNDDEGDSYSDNPCSCSQSQCCSRYLCMGAMSLFLPCLLCYPPAKGCLKLCKGCYDWIHRPGCRCENSNTVYCKLESCSSRGLGKPS</sequence>
<proteinExistence type="evidence at transcript level"/>
<protein>
    <recommendedName>
        <fullName>Protein sprouty homolog 1</fullName>
        <shortName>Spry-1</shortName>
    </recommendedName>
</protein>